<gene>
    <name evidence="1" type="primary">nhaA</name>
    <name type="ordered locus">MS1801</name>
</gene>
<name>NHAA_MANSM</name>
<dbReference type="EMBL" id="AE016827">
    <property type="protein sequence ID" value="AAU38408.1"/>
    <property type="status" value="ALT_INIT"/>
    <property type="molecule type" value="Genomic_DNA"/>
</dbReference>
<dbReference type="RefSeq" id="WP_041640229.1">
    <property type="nucleotide sequence ID" value="NC_006300.1"/>
</dbReference>
<dbReference type="SMR" id="Q65RK2"/>
<dbReference type="STRING" id="221988.MS1801"/>
<dbReference type="KEGG" id="msu:MS1801"/>
<dbReference type="eggNOG" id="COG3004">
    <property type="taxonomic scope" value="Bacteria"/>
</dbReference>
<dbReference type="HOGENOM" id="CLU_015803_1_0_6"/>
<dbReference type="OrthoDB" id="9808135at2"/>
<dbReference type="Proteomes" id="UP000000607">
    <property type="component" value="Chromosome"/>
</dbReference>
<dbReference type="GO" id="GO:0005886">
    <property type="term" value="C:plasma membrane"/>
    <property type="evidence" value="ECO:0007669"/>
    <property type="project" value="UniProtKB-SubCell"/>
</dbReference>
<dbReference type="GO" id="GO:0015385">
    <property type="term" value="F:sodium:proton antiporter activity"/>
    <property type="evidence" value="ECO:0007669"/>
    <property type="project" value="TreeGrafter"/>
</dbReference>
<dbReference type="GO" id="GO:0006885">
    <property type="term" value="P:regulation of pH"/>
    <property type="evidence" value="ECO:0007669"/>
    <property type="project" value="InterPro"/>
</dbReference>
<dbReference type="Gene3D" id="1.20.1530.10">
    <property type="entry name" value="Na+/H+ antiporter like domain"/>
    <property type="match status" value="1"/>
</dbReference>
<dbReference type="HAMAP" id="MF_01844">
    <property type="entry name" value="NhaA"/>
    <property type="match status" value="1"/>
</dbReference>
<dbReference type="InterPro" id="IPR023171">
    <property type="entry name" value="Na/H_antiporter_dom_sf"/>
</dbReference>
<dbReference type="InterPro" id="IPR004670">
    <property type="entry name" value="NhaA"/>
</dbReference>
<dbReference type="NCBIfam" id="TIGR00773">
    <property type="entry name" value="NhaA"/>
    <property type="match status" value="1"/>
</dbReference>
<dbReference type="NCBIfam" id="NF007111">
    <property type="entry name" value="PRK09560.1"/>
    <property type="match status" value="1"/>
</dbReference>
<dbReference type="NCBIfam" id="NF007112">
    <property type="entry name" value="PRK09561.1"/>
    <property type="match status" value="1"/>
</dbReference>
<dbReference type="PANTHER" id="PTHR30341:SF0">
    <property type="entry name" value="NA(+)_H(+) ANTIPORTER NHAA"/>
    <property type="match status" value="1"/>
</dbReference>
<dbReference type="PANTHER" id="PTHR30341">
    <property type="entry name" value="SODIUM ION/PROTON ANTIPORTER NHAA-RELATED"/>
    <property type="match status" value="1"/>
</dbReference>
<dbReference type="Pfam" id="PF06965">
    <property type="entry name" value="Na_H_antiport_1"/>
    <property type="match status" value="1"/>
</dbReference>
<sequence>MAQIQRFFKMGSASGILLFFFALLAIIFANTSLNNFYFNFLDIPVSVQFGEFMINKTLLHWINDGFMAVFFVLVGLEVKREMLEGSLSRYQLAIFPAVAAIGGMIVPALIYYLITNQHPELSNGWAIPMATDIAFALGIVALLGTRVPLPLKVFLLALAIIDDLGAIVVIAVFFSEELSIQALSVAIVAIAGLITLNRMKVGHLCAYLIFGLILWAAVLKSGVHATLAGVIIGFCIPQKDSEGKSPLHTFEHILTPWCSFFVLPLFAFANAGVSLGTINTDMIFSTLPLGIALGLIVGKPLGVFSFSYFSVKLGIAKLPEGIKWKQVFAIAILCGIGFTMSMFLAGLAFTDGQSDSLINTLSRLGILLGSSVSAILGYLLLKSTTK</sequence>
<keyword id="KW-0050">Antiport</keyword>
<keyword id="KW-0997">Cell inner membrane</keyword>
<keyword id="KW-1003">Cell membrane</keyword>
<keyword id="KW-0406">Ion transport</keyword>
<keyword id="KW-0472">Membrane</keyword>
<keyword id="KW-0915">Sodium</keyword>
<keyword id="KW-0739">Sodium transport</keyword>
<keyword id="KW-0812">Transmembrane</keyword>
<keyword id="KW-1133">Transmembrane helix</keyword>
<keyword id="KW-0813">Transport</keyword>
<organism>
    <name type="scientific">Mannheimia succiniciproducens (strain KCTC 0769BP / MBEL55E)</name>
    <dbReference type="NCBI Taxonomy" id="221988"/>
    <lineage>
        <taxon>Bacteria</taxon>
        <taxon>Pseudomonadati</taxon>
        <taxon>Pseudomonadota</taxon>
        <taxon>Gammaproteobacteria</taxon>
        <taxon>Pasteurellales</taxon>
        <taxon>Pasteurellaceae</taxon>
        <taxon>Basfia</taxon>
    </lineage>
</organism>
<evidence type="ECO:0000255" key="1">
    <source>
        <dbReference type="HAMAP-Rule" id="MF_01844"/>
    </source>
</evidence>
<evidence type="ECO:0000305" key="2"/>
<proteinExistence type="inferred from homology"/>
<reference key="1">
    <citation type="journal article" date="2004" name="Nat. Biotechnol.">
        <title>The genome sequence of the capnophilic rumen bacterium Mannheimia succiniciproducens.</title>
        <authorList>
            <person name="Hong S.H."/>
            <person name="Kim J.S."/>
            <person name="Lee S.Y."/>
            <person name="In Y.H."/>
            <person name="Choi S.S."/>
            <person name="Rih J.-K."/>
            <person name="Kim C.H."/>
            <person name="Jeong H."/>
            <person name="Hur C.G."/>
            <person name="Kim J.J."/>
        </authorList>
    </citation>
    <scope>NUCLEOTIDE SEQUENCE [LARGE SCALE GENOMIC DNA]</scope>
    <source>
        <strain>KCTC 0769BP / MBEL55E</strain>
    </source>
</reference>
<comment type="function">
    <text evidence="1">Na(+)/H(+) antiporter that extrudes sodium in exchange for external protons.</text>
</comment>
<comment type="catalytic activity">
    <reaction evidence="1">
        <text>Na(+)(in) + 2 H(+)(out) = Na(+)(out) + 2 H(+)(in)</text>
        <dbReference type="Rhea" id="RHEA:29251"/>
        <dbReference type="ChEBI" id="CHEBI:15378"/>
        <dbReference type="ChEBI" id="CHEBI:29101"/>
    </reaction>
    <physiologicalReaction direction="left-to-right" evidence="1">
        <dbReference type="Rhea" id="RHEA:29252"/>
    </physiologicalReaction>
</comment>
<comment type="subcellular location">
    <subcellularLocation>
        <location evidence="1">Cell inner membrane</location>
        <topology evidence="1">Multi-pass membrane protein</topology>
    </subcellularLocation>
</comment>
<comment type="similarity">
    <text evidence="1">Belongs to the NhaA Na(+)/H(+) (TC 2.A.33) antiporter family.</text>
</comment>
<comment type="sequence caution" evidence="2">
    <conflict type="erroneous initiation">
        <sequence resource="EMBL-CDS" id="AAU38408"/>
    </conflict>
</comment>
<protein>
    <recommendedName>
        <fullName evidence="1">Na(+)/H(+) antiporter NhaA</fullName>
    </recommendedName>
    <alternativeName>
        <fullName evidence="1">Sodium/proton antiporter NhaA</fullName>
    </alternativeName>
</protein>
<accession>Q65RK2</accession>
<feature type="chain" id="PRO_0000334335" description="Na(+)/H(+) antiporter NhaA">
    <location>
        <begin position="1"/>
        <end position="386"/>
    </location>
</feature>
<feature type="transmembrane region" description="Helical" evidence="1">
    <location>
        <begin position="10"/>
        <end position="30"/>
    </location>
</feature>
<feature type="transmembrane region" description="Helical" evidence="1">
    <location>
        <begin position="58"/>
        <end position="78"/>
    </location>
</feature>
<feature type="transmembrane region" description="Helical" evidence="1">
    <location>
        <begin position="94"/>
        <end position="114"/>
    </location>
</feature>
<feature type="transmembrane region" description="Helical" evidence="1">
    <location>
        <begin position="124"/>
        <end position="144"/>
    </location>
</feature>
<feature type="transmembrane region" description="Helical" evidence="1">
    <location>
        <begin position="154"/>
        <end position="174"/>
    </location>
</feature>
<feature type="transmembrane region" description="Helical" evidence="1">
    <location>
        <begin position="176"/>
        <end position="196"/>
    </location>
</feature>
<feature type="transmembrane region" description="Helical" evidence="1">
    <location>
        <begin position="199"/>
        <end position="219"/>
    </location>
</feature>
<feature type="transmembrane region" description="Helical" evidence="1">
    <location>
        <begin position="253"/>
        <end position="273"/>
    </location>
</feature>
<feature type="transmembrane region" description="Helical" evidence="1">
    <location>
        <begin position="283"/>
        <end position="303"/>
    </location>
</feature>
<feature type="transmembrane region" description="Helical" evidence="1">
    <location>
        <begin position="327"/>
        <end position="347"/>
    </location>
</feature>
<feature type="transmembrane region" description="Helical" evidence="1">
    <location>
        <begin position="361"/>
        <end position="381"/>
    </location>
</feature>